<organism>
    <name type="scientific">Leptospira interrogans serogroup Icterohaemorrhagiae serovar Lai (strain 56601)</name>
    <dbReference type="NCBI Taxonomy" id="189518"/>
    <lineage>
        <taxon>Bacteria</taxon>
        <taxon>Pseudomonadati</taxon>
        <taxon>Spirochaetota</taxon>
        <taxon>Spirochaetia</taxon>
        <taxon>Leptospirales</taxon>
        <taxon>Leptospiraceae</taxon>
        <taxon>Leptospira</taxon>
    </lineage>
</organism>
<evidence type="ECO:0000255" key="1">
    <source>
        <dbReference type="HAMAP-Rule" id="MF_01368"/>
    </source>
</evidence>
<evidence type="ECO:0000256" key="2">
    <source>
        <dbReference type="SAM" id="MobiDB-lite"/>
    </source>
</evidence>
<evidence type="ECO:0000305" key="3"/>
<proteinExistence type="inferred from homology"/>
<accession>Q9XD08</accession>
<gene>
    <name evidence="1" type="primary">rplQ</name>
    <name type="ordered locus">LA_0766</name>
</gene>
<reference key="1">
    <citation type="journal article" date="2000" name="FEMS Microbiol. Lett.">
        <title>Characterization of the Leptospira interrogans S10-spc-alpha operon.</title>
        <authorList>
            <person name="Zuerner R.L."/>
            <person name="Hartskeerl R.A."/>
            <person name="van de Kemp H."/>
            <person name="Bal A.E."/>
        </authorList>
    </citation>
    <scope>NUCLEOTIDE SEQUENCE [GENOMIC DNA]</scope>
    <source>
        <strain>Lai / Serogroup Icterohaemorrhagiae / Serovar lai</strain>
    </source>
</reference>
<reference key="2">
    <citation type="journal article" date="2003" name="Nature">
        <title>Unique physiological and pathogenic features of Leptospira interrogans revealed by whole-genome sequencing.</title>
        <authorList>
            <person name="Ren S.-X."/>
            <person name="Fu G."/>
            <person name="Jiang X.-G."/>
            <person name="Zeng R."/>
            <person name="Miao Y.-G."/>
            <person name="Xu H."/>
            <person name="Zhang Y.-X."/>
            <person name="Xiong H."/>
            <person name="Lu G."/>
            <person name="Lu L.-F."/>
            <person name="Jiang H.-Q."/>
            <person name="Jia J."/>
            <person name="Tu Y.-F."/>
            <person name="Jiang J.-X."/>
            <person name="Gu W.-Y."/>
            <person name="Zhang Y.-Q."/>
            <person name="Cai Z."/>
            <person name="Sheng H.-H."/>
            <person name="Yin H.-F."/>
            <person name="Zhang Y."/>
            <person name="Zhu G.-F."/>
            <person name="Wan M."/>
            <person name="Huang H.-L."/>
            <person name="Qian Z."/>
            <person name="Wang S.-Y."/>
            <person name="Ma W."/>
            <person name="Yao Z.-J."/>
            <person name="Shen Y."/>
            <person name="Qiang B.-Q."/>
            <person name="Xia Q.-C."/>
            <person name="Guo X.-K."/>
            <person name="Danchin A."/>
            <person name="Saint Girons I."/>
            <person name="Somerville R.L."/>
            <person name="Wen Y.-M."/>
            <person name="Shi M.-H."/>
            <person name="Chen Z."/>
            <person name="Xu J.-G."/>
            <person name="Zhao G.-P."/>
        </authorList>
    </citation>
    <scope>NUCLEOTIDE SEQUENCE [LARGE SCALE GENOMIC DNA]</scope>
    <source>
        <strain>56601</strain>
    </source>
</reference>
<keyword id="KW-1185">Reference proteome</keyword>
<keyword id="KW-0687">Ribonucleoprotein</keyword>
<keyword id="KW-0689">Ribosomal protein</keyword>
<comment type="subunit">
    <text evidence="1">Part of the 50S ribosomal subunit. Contacts protein L32.</text>
</comment>
<comment type="similarity">
    <text evidence="1">Belongs to the bacterial ribosomal protein bL17 family.</text>
</comment>
<dbReference type="EMBL" id="AF115283">
    <property type="protein sequence ID" value="AAD40611.1"/>
    <property type="molecule type" value="Genomic_DNA"/>
</dbReference>
<dbReference type="EMBL" id="AE010300">
    <property type="protein sequence ID" value="AAN47965.1"/>
    <property type="molecule type" value="Genomic_DNA"/>
</dbReference>
<dbReference type="RefSeq" id="NP_710947.1">
    <property type="nucleotide sequence ID" value="NC_004342.2"/>
</dbReference>
<dbReference type="RefSeq" id="WP_001042618.1">
    <property type="nucleotide sequence ID" value="NC_004342.2"/>
</dbReference>
<dbReference type="SMR" id="Q9XD08"/>
<dbReference type="FunCoup" id="Q9XD08">
    <property type="interactions" value="574"/>
</dbReference>
<dbReference type="STRING" id="189518.LA_0766"/>
<dbReference type="PaxDb" id="189518-LA_0766"/>
<dbReference type="EnsemblBacteria" id="AAN47965">
    <property type="protein sequence ID" value="AAN47965"/>
    <property type="gene ID" value="LA_0766"/>
</dbReference>
<dbReference type="KEGG" id="lil:LA_0766"/>
<dbReference type="PATRIC" id="fig|189518.3.peg.773"/>
<dbReference type="HOGENOM" id="CLU_074407_2_0_12"/>
<dbReference type="InParanoid" id="Q9XD08"/>
<dbReference type="OrthoDB" id="9809073at2"/>
<dbReference type="Proteomes" id="UP000001408">
    <property type="component" value="Chromosome I"/>
</dbReference>
<dbReference type="GO" id="GO:0022625">
    <property type="term" value="C:cytosolic large ribosomal subunit"/>
    <property type="evidence" value="ECO:0000318"/>
    <property type="project" value="GO_Central"/>
</dbReference>
<dbReference type="GO" id="GO:0003735">
    <property type="term" value="F:structural constituent of ribosome"/>
    <property type="evidence" value="ECO:0000318"/>
    <property type="project" value="GO_Central"/>
</dbReference>
<dbReference type="GO" id="GO:0006412">
    <property type="term" value="P:translation"/>
    <property type="evidence" value="ECO:0007669"/>
    <property type="project" value="UniProtKB-UniRule"/>
</dbReference>
<dbReference type="FunFam" id="3.90.1030.10:FF:000008">
    <property type="entry name" value="50S ribosomal protein L17"/>
    <property type="match status" value="1"/>
</dbReference>
<dbReference type="Gene3D" id="3.90.1030.10">
    <property type="entry name" value="Ribosomal protein L17"/>
    <property type="match status" value="1"/>
</dbReference>
<dbReference type="HAMAP" id="MF_01368">
    <property type="entry name" value="Ribosomal_bL17"/>
    <property type="match status" value="1"/>
</dbReference>
<dbReference type="InterPro" id="IPR000456">
    <property type="entry name" value="Ribosomal_bL17"/>
</dbReference>
<dbReference type="InterPro" id="IPR047859">
    <property type="entry name" value="Ribosomal_bL17_CS"/>
</dbReference>
<dbReference type="InterPro" id="IPR036373">
    <property type="entry name" value="Ribosomal_bL17_sf"/>
</dbReference>
<dbReference type="NCBIfam" id="TIGR00059">
    <property type="entry name" value="L17"/>
    <property type="match status" value="1"/>
</dbReference>
<dbReference type="PANTHER" id="PTHR14413:SF16">
    <property type="entry name" value="LARGE RIBOSOMAL SUBUNIT PROTEIN BL17M"/>
    <property type="match status" value="1"/>
</dbReference>
<dbReference type="PANTHER" id="PTHR14413">
    <property type="entry name" value="RIBOSOMAL PROTEIN L17"/>
    <property type="match status" value="1"/>
</dbReference>
<dbReference type="Pfam" id="PF01196">
    <property type="entry name" value="Ribosomal_L17"/>
    <property type="match status" value="1"/>
</dbReference>
<dbReference type="SUPFAM" id="SSF64263">
    <property type="entry name" value="Prokaryotic ribosomal protein L17"/>
    <property type="match status" value="1"/>
</dbReference>
<dbReference type="PROSITE" id="PS01167">
    <property type="entry name" value="RIBOSOMAL_L17"/>
    <property type="match status" value="1"/>
</dbReference>
<sequence>MNKRNKVKHLNRNKGHRDALINNMITSLFKYERIESTQAKLKVVRSHAEKLITRAKKNLVTDLKPEVQLHNKREVMKRIKDREVVVKLFEDIAKRFETKNGGYTRVLKLVNRISDNSEVGILELTSRKERSTLLKERIEKREIQTKAREEKRATRKSNSAPVNKETTSKKK</sequence>
<protein>
    <recommendedName>
        <fullName evidence="1">Large ribosomal subunit protein bL17</fullName>
    </recommendedName>
    <alternativeName>
        <fullName evidence="3">50S ribosomal protein L17</fullName>
    </alternativeName>
</protein>
<feature type="chain" id="PRO_0000175531" description="Large ribosomal subunit protein bL17">
    <location>
        <begin position="1"/>
        <end position="171"/>
    </location>
</feature>
<feature type="region of interest" description="Disordered" evidence="2">
    <location>
        <begin position="140"/>
        <end position="171"/>
    </location>
</feature>
<feature type="compositionally biased region" description="Basic and acidic residues" evidence="2">
    <location>
        <begin position="140"/>
        <end position="152"/>
    </location>
</feature>
<feature type="compositionally biased region" description="Polar residues" evidence="2">
    <location>
        <begin position="156"/>
        <end position="165"/>
    </location>
</feature>
<feature type="sequence conflict" description="In Ref. 1; AAD40611." evidence="3" ref="1">
    <original>K</original>
    <variation>EIKVCLKT</variation>
    <location>
        <position position="171"/>
    </location>
</feature>
<name>RL17_LEPIN</name>